<organism>
    <name type="scientific">Halobacterium salinarum (strain ATCC 700922 / JCM 11081 / NRC-1)</name>
    <name type="common">Halobacterium halobium</name>
    <dbReference type="NCBI Taxonomy" id="64091"/>
    <lineage>
        <taxon>Archaea</taxon>
        <taxon>Methanobacteriati</taxon>
        <taxon>Methanobacteriota</taxon>
        <taxon>Stenosarchaea group</taxon>
        <taxon>Halobacteria</taxon>
        <taxon>Halobacteriales</taxon>
        <taxon>Halobacteriaceae</taxon>
        <taxon>Halobacterium</taxon>
        <taxon>Halobacterium salinarum NRC-34001</taxon>
    </lineage>
</organism>
<feature type="chain" id="PRO_0000112356" description="Carbamoyl phosphate synthase small chain">
    <location>
        <begin position="1"/>
        <end position="353"/>
    </location>
</feature>
<feature type="domain" description="Glutamine amidotransferase type-1" evidence="1">
    <location>
        <begin position="166"/>
        <end position="349"/>
    </location>
</feature>
<feature type="region of interest" description="CPSase" evidence="1">
    <location>
        <begin position="1"/>
        <end position="166"/>
    </location>
</feature>
<feature type="active site" description="Nucleophile" evidence="1">
    <location>
        <position position="241"/>
    </location>
</feature>
<feature type="active site" evidence="1">
    <location>
        <position position="322"/>
    </location>
</feature>
<feature type="active site" evidence="1">
    <location>
        <position position="324"/>
    </location>
</feature>
<feature type="binding site" evidence="1">
    <location>
        <position position="45"/>
    </location>
    <ligand>
        <name>L-glutamine</name>
        <dbReference type="ChEBI" id="CHEBI:58359"/>
    </ligand>
</feature>
<feature type="binding site" evidence="1">
    <location>
        <position position="214"/>
    </location>
    <ligand>
        <name>L-glutamine</name>
        <dbReference type="ChEBI" id="CHEBI:58359"/>
    </ligand>
</feature>
<feature type="binding site" evidence="1">
    <location>
        <position position="216"/>
    </location>
    <ligand>
        <name>L-glutamine</name>
        <dbReference type="ChEBI" id="CHEBI:58359"/>
    </ligand>
</feature>
<feature type="binding site" evidence="1">
    <location>
        <position position="242"/>
    </location>
    <ligand>
        <name>L-glutamine</name>
        <dbReference type="ChEBI" id="CHEBI:58359"/>
    </ligand>
</feature>
<feature type="binding site" evidence="1">
    <location>
        <position position="245"/>
    </location>
    <ligand>
        <name>L-glutamine</name>
        <dbReference type="ChEBI" id="CHEBI:58359"/>
    </ligand>
</feature>
<feature type="binding site" evidence="1">
    <location>
        <position position="283"/>
    </location>
    <ligand>
        <name>L-glutamine</name>
        <dbReference type="ChEBI" id="CHEBI:58359"/>
    </ligand>
</feature>
<feature type="binding site" evidence="1">
    <location>
        <position position="285"/>
    </location>
    <ligand>
        <name>L-glutamine</name>
        <dbReference type="ChEBI" id="CHEBI:58359"/>
    </ligand>
</feature>
<feature type="binding site" evidence="1">
    <location>
        <position position="286"/>
    </location>
    <ligand>
        <name>L-glutamine</name>
        <dbReference type="ChEBI" id="CHEBI:58359"/>
    </ligand>
</feature>
<comment type="function">
    <text evidence="1">Small subunit of the glutamine-dependent carbamoyl phosphate synthetase (CPSase). CPSase catalyzes the formation of carbamoyl phosphate from the ammonia moiety of glutamine, carbonate, and phosphate donated by ATP, constituting the first step of 2 biosynthetic pathways, one leading to arginine and/or urea and the other to pyrimidine nucleotides. The small subunit (glutamine amidotransferase) binds and cleaves glutamine to supply the large subunit with the substrate ammonia.</text>
</comment>
<comment type="catalytic activity">
    <reaction evidence="1">
        <text>hydrogencarbonate + L-glutamine + 2 ATP + H2O = carbamoyl phosphate + L-glutamate + 2 ADP + phosphate + 2 H(+)</text>
        <dbReference type="Rhea" id="RHEA:18633"/>
        <dbReference type="ChEBI" id="CHEBI:15377"/>
        <dbReference type="ChEBI" id="CHEBI:15378"/>
        <dbReference type="ChEBI" id="CHEBI:17544"/>
        <dbReference type="ChEBI" id="CHEBI:29985"/>
        <dbReference type="ChEBI" id="CHEBI:30616"/>
        <dbReference type="ChEBI" id="CHEBI:43474"/>
        <dbReference type="ChEBI" id="CHEBI:58228"/>
        <dbReference type="ChEBI" id="CHEBI:58359"/>
        <dbReference type="ChEBI" id="CHEBI:456216"/>
        <dbReference type="EC" id="6.3.5.5"/>
    </reaction>
</comment>
<comment type="catalytic activity">
    <molecule>Carbamoyl phosphate synthase small chain</molecule>
    <reaction evidence="1">
        <text>L-glutamine + H2O = L-glutamate + NH4(+)</text>
        <dbReference type="Rhea" id="RHEA:15889"/>
        <dbReference type="ChEBI" id="CHEBI:15377"/>
        <dbReference type="ChEBI" id="CHEBI:28938"/>
        <dbReference type="ChEBI" id="CHEBI:29985"/>
        <dbReference type="ChEBI" id="CHEBI:58359"/>
    </reaction>
</comment>
<comment type="pathway">
    <text evidence="1">Amino-acid biosynthesis; L-arginine biosynthesis; carbamoyl phosphate from bicarbonate: step 1/1.</text>
</comment>
<comment type="pathway">
    <text evidence="1">Pyrimidine metabolism; UMP biosynthesis via de novo pathway; (S)-dihydroorotate from bicarbonate: step 1/3.</text>
</comment>
<comment type="subunit">
    <text evidence="1">Composed of two chains; the small (or glutamine) chain promotes the hydrolysis of glutamine to ammonia, which is used by the large (or ammonia) chain to synthesize carbamoyl phosphate. Tetramer of heterodimers (alpha,beta)4.</text>
</comment>
<comment type="similarity">
    <text evidence="1">Belongs to the CarA family.</text>
</comment>
<reference key="1">
    <citation type="journal article" date="2000" name="Proc. Natl. Acad. Sci. U.S.A.">
        <title>Genome sequence of Halobacterium species NRC-1.</title>
        <authorList>
            <person name="Ng W.V."/>
            <person name="Kennedy S.P."/>
            <person name="Mahairas G.G."/>
            <person name="Berquist B."/>
            <person name="Pan M."/>
            <person name="Shukla H.D."/>
            <person name="Lasky S.R."/>
            <person name="Baliga N.S."/>
            <person name="Thorsson V."/>
            <person name="Sbrogna J."/>
            <person name="Swartzell S."/>
            <person name="Weir D."/>
            <person name="Hall J."/>
            <person name="Dahl T.A."/>
            <person name="Welti R."/>
            <person name="Goo Y.A."/>
            <person name="Leithauser B."/>
            <person name="Keller K."/>
            <person name="Cruz R."/>
            <person name="Danson M.J."/>
            <person name="Hough D.W."/>
            <person name="Maddocks D.G."/>
            <person name="Jablonski P.E."/>
            <person name="Krebs M.P."/>
            <person name="Angevine C.M."/>
            <person name="Dale H."/>
            <person name="Isenbarger T.A."/>
            <person name="Peck R.F."/>
            <person name="Pohlschroder M."/>
            <person name="Spudich J.L."/>
            <person name="Jung K.-H."/>
            <person name="Alam M."/>
            <person name="Freitas T."/>
            <person name="Hou S."/>
            <person name="Daniels C.J."/>
            <person name="Dennis P.P."/>
            <person name="Omer A.D."/>
            <person name="Ebhardt H."/>
            <person name="Lowe T.M."/>
            <person name="Liang P."/>
            <person name="Riley M."/>
            <person name="Hood L."/>
            <person name="DasSarma S."/>
        </authorList>
    </citation>
    <scope>NUCLEOTIDE SEQUENCE [LARGE SCALE GENOMIC DNA]</scope>
    <source>
        <strain>ATCC 700922 / JCM 11081 / NRC-1</strain>
    </source>
</reference>
<sequence length="353" mass="37197">MSDAYLALETGDVVEATARAPGMARGELVFTTAYTGYEESLTDPSYEAQVLTFAYPLIGNYGVRPERTESDRVHPSAVVARELTDDVADWLRTEGVPAVDGIDTRDLVLDIRDGGAMQVGIAAGPDASPATARAQLADCPRLSARTEIGAHVSVDTAETHGNGDTTVALVDCGAKRSIIDAFVARGATVHRLPYDATPADIAAVDPDLLFISNGPGDPANFDAAEHLVDEYIGTVPIAGICLGQQIVARALGGDTEKMDFGHRGVNQPVLDHDSGRVVMTTQNHGYTVADPGDLTVTQVNVNDGTPEALDSAPLDVLTRQYHPEANPGPHDTRGFFDDVLAMADASYTPATAD</sequence>
<evidence type="ECO:0000255" key="1">
    <source>
        <dbReference type="HAMAP-Rule" id="MF_01209"/>
    </source>
</evidence>
<protein>
    <recommendedName>
        <fullName evidence="1">Carbamoyl phosphate synthase small chain</fullName>
        <ecNumber evidence="1">6.3.5.5</ecNumber>
    </recommendedName>
    <alternativeName>
        <fullName evidence="1">Carbamoyl phosphate synthetase glutamine chain</fullName>
    </alternativeName>
</protein>
<name>CARA_HALSA</name>
<gene>
    <name evidence="1" type="primary">carA</name>
    <name type="ordered locus">VNG_1815G</name>
</gene>
<accession>Q9HP42</accession>
<dbReference type="EC" id="6.3.5.5" evidence="1"/>
<dbReference type="EMBL" id="AE004437">
    <property type="protein sequence ID" value="AAG20028.1"/>
    <property type="molecule type" value="Genomic_DNA"/>
</dbReference>
<dbReference type="PIR" id="H84332">
    <property type="entry name" value="H84332"/>
</dbReference>
<dbReference type="RefSeq" id="WP_010903326.1">
    <property type="nucleotide sequence ID" value="NC_002607.1"/>
</dbReference>
<dbReference type="SMR" id="Q9HP42"/>
<dbReference type="FunCoup" id="Q9HP42">
    <property type="interactions" value="207"/>
</dbReference>
<dbReference type="STRING" id="64091.VNG_1815G"/>
<dbReference type="PaxDb" id="64091-VNG_1815G"/>
<dbReference type="GeneID" id="89350037"/>
<dbReference type="KEGG" id="hal:VNG_1815G"/>
<dbReference type="PATRIC" id="fig|64091.14.peg.1384"/>
<dbReference type="HOGENOM" id="CLU_035901_2_1_2"/>
<dbReference type="InParanoid" id="Q9HP42"/>
<dbReference type="OrthoDB" id="7675at2157"/>
<dbReference type="PhylomeDB" id="Q9HP42"/>
<dbReference type="UniPathway" id="UPA00068">
    <property type="reaction ID" value="UER00171"/>
</dbReference>
<dbReference type="UniPathway" id="UPA00070">
    <property type="reaction ID" value="UER00115"/>
</dbReference>
<dbReference type="Proteomes" id="UP000000554">
    <property type="component" value="Chromosome"/>
</dbReference>
<dbReference type="GO" id="GO:0005951">
    <property type="term" value="C:carbamoyl-phosphate synthase complex"/>
    <property type="evidence" value="ECO:0000318"/>
    <property type="project" value="GO_Central"/>
</dbReference>
<dbReference type="GO" id="GO:0005737">
    <property type="term" value="C:cytoplasm"/>
    <property type="evidence" value="ECO:0000318"/>
    <property type="project" value="GO_Central"/>
</dbReference>
<dbReference type="GO" id="GO:0005524">
    <property type="term" value="F:ATP binding"/>
    <property type="evidence" value="ECO:0007669"/>
    <property type="project" value="UniProtKB-UniRule"/>
</dbReference>
<dbReference type="GO" id="GO:0004088">
    <property type="term" value="F:carbamoyl-phosphate synthase (glutamine-hydrolyzing) activity"/>
    <property type="evidence" value="ECO:0007669"/>
    <property type="project" value="UniProtKB-UniRule"/>
</dbReference>
<dbReference type="GO" id="GO:0004359">
    <property type="term" value="F:glutaminase activity"/>
    <property type="evidence" value="ECO:0007669"/>
    <property type="project" value="RHEA"/>
</dbReference>
<dbReference type="GO" id="GO:0006207">
    <property type="term" value="P:'de novo' pyrimidine nucleobase biosynthetic process"/>
    <property type="evidence" value="ECO:0007669"/>
    <property type="project" value="InterPro"/>
</dbReference>
<dbReference type="GO" id="GO:0044205">
    <property type="term" value="P:'de novo' UMP biosynthetic process"/>
    <property type="evidence" value="ECO:0007669"/>
    <property type="project" value="UniProtKB-UniRule"/>
</dbReference>
<dbReference type="GO" id="GO:0006541">
    <property type="term" value="P:glutamine metabolic process"/>
    <property type="evidence" value="ECO:0007669"/>
    <property type="project" value="InterPro"/>
</dbReference>
<dbReference type="GO" id="GO:0006526">
    <property type="term" value="P:L-arginine biosynthetic process"/>
    <property type="evidence" value="ECO:0000318"/>
    <property type="project" value="GO_Central"/>
</dbReference>
<dbReference type="CDD" id="cd01744">
    <property type="entry name" value="GATase1_CPSase"/>
    <property type="match status" value="1"/>
</dbReference>
<dbReference type="FunFam" id="3.50.30.20:FF:000010">
    <property type="entry name" value="Carbamoyl-phosphate synthase small chain"/>
    <property type="match status" value="1"/>
</dbReference>
<dbReference type="Gene3D" id="3.40.50.880">
    <property type="match status" value="1"/>
</dbReference>
<dbReference type="Gene3D" id="3.50.30.20">
    <property type="entry name" value="Carbamoyl-phosphate synthase small subunit, N-terminal domain"/>
    <property type="match status" value="1"/>
</dbReference>
<dbReference type="HAMAP" id="MF_01209">
    <property type="entry name" value="CPSase_S_chain"/>
    <property type="match status" value="1"/>
</dbReference>
<dbReference type="InterPro" id="IPR050472">
    <property type="entry name" value="Anth_synth/Amidotransfase"/>
</dbReference>
<dbReference type="InterPro" id="IPR006274">
    <property type="entry name" value="CarbamoylP_synth_ssu"/>
</dbReference>
<dbReference type="InterPro" id="IPR002474">
    <property type="entry name" value="CarbamoylP_synth_ssu_N"/>
</dbReference>
<dbReference type="InterPro" id="IPR036480">
    <property type="entry name" value="CarbP_synth_ssu_N_sf"/>
</dbReference>
<dbReference type="InterPro" id="IPR029062">
    <property type="entry name" value="Class_I_gatase-like"/>
</dbReference>
<dbReference type="InterPro" id="IPR035686">
    <property type="entry name" value="CPSase_GATase1"/>
</dbReference>
<dbReference type="InterPro" id="IPR017926">
    <property type="entry name" value="GATASE"/>
</dbReference>
<dbReference type="NCBIfam" id="TIGR01368">
    <property type="entry name" value="CPSaseIIsmall"/>
    <property type="match status" value="1"/>
</dbReference>
<dbReference type="NCBIfam" id="NF009475">
    <property type="entry name" value="PRK12838.1"/>
    <property type="match status" value="1"/>
</dbReference>
<dbReference type="PANTHER" id="PTHR43418:SF7">
    <property type="entry name" value="CARBAMOYL-PHOSPHATE SYNTHASE SMALL CHAIN"/>
    <property type="match status" value="1"/>
</dbReference>
<dbReference type="PANTHER" id="PTHR43418">
    <property type="entry name" value="MULTIFUNCTIONAL TRYPTOPHAN BIOSYNTHESIS PROTEIN-RELATED"/>
    <property type="match status" value="1"/>
</dbReference>
<dbReference type="Pfam" id="PF00988">
    <property type="entry name" value="CPSase_sm_chain"/>
    <property type="match status" value="1"/>
</dbReference>
<dbReference type="Pfam" id="PF00117">
    <property type="entry name" value="GATase"/>
    <property type="match status" value="1"/>
</dbReference>
<dbReference type="PRINTS" id="PR00097">
    <property type="entry name" value="ANTSNTHASEII"/>
</dbReference>
<dbReference type="PRINTS" id="PR00099">
    <property type="entry name" value="CPSGATASE"/>
</dbReference>
<dbReference type="PRINTS" id="PR00096">
    <property type="entry name" value="GATASE"/>
</dbReference>
<dbReference type="SMART" id="SM01097">
    <property type="entry name" value="CPSase_sm_chain"/>
    <property type="match status" value="1"/>
</dbReference>
<dbReference type="SUPFAM" id="SSF52021">
    <property type="entry name" value="Carbamoyl phosphate synthetase, small subunit N-terminal domain"/>
    <property type="match status" value="1"/>
</dbReference>
<dbReference type="SUPFAM" id="SSF52317">
    <property type="entry name" value="Class I glutamine amidotransferase-like"/>
    <property type="match status" value="1"/>
</dbReference>
<dbReference type="PROSITE" id="PS51273">
    <property type="entry name" value="GATASE_TYPE_1"/>
    <property type="match status" value="1"/>
</dbReference>
<proteinExistence type="inferred from homology"/>
<keyword id="KW-0028">Amino-acid biosynthesis</keyword>
<keyword id="KW-0055">Arginine biosynthesis</keyword>
<keyword id="KW-0067">ATP-binding</keyword>
<keyword id="KW-0315">Glutamine amidotransferase</keyword>
<keyword id="KW-0436">Ligase</keyword>
<keyword id="KW-0547">Nucleotide-binding</keyword>
<keyword id="KW-0665">Pyrimidine biosynthesis</keyword>
<keyword id="KW-1185">Reference proteome</keyword>